<dbReference type="EMBL" id="CP001396">
    <property type="protein sequence ID" value="ACR62125.1"/>
    <property type="molecule type" value="Genomic_DNA"/>
</dbReference>
<dbReference type="RefSeq" id="WP_000517476.1">
    <property type="nucleotide sequence ID" value="NC_012759.1"/>
</dbReference>
<dbReference type="SMR" id="C4ZZQ2"/>
<dbReference type="GeneID" id="93779258"/>
<dbReference type="KEGG" id="ebw:BWG_2484"/>
<dbReference type="HOGENOM" id="CLU_134863_5_2_6"/>
<dbReference type="GO" id="GO:0032153">
    <property type="term" value="C:cell division site"/>
    <property type="evidence" value="ECO:0007669"/>
    <property type="project" value="UniProtKB-UniRule"/>
</dbReference>
<dbReference type="GO" id="GO:0030428">
    <property type="term" value="C:cell septum"/>
    <property type="evidence" value="ECO:0007669"/>
    <property type="project" value="TreeGrafter"/>
</dbReference>
<dbReference type="GO" id="GO:0005886">
    <property type="term" value="C:plasma membrane"/>
    <property type="evidence" value="ECO:0007669"/>
    <property type="project" value="UniProtKB-SubCell"/>
</dbReference>
<dbReference type="GO" id="GO:0043093">
    <property type="term" value="P:FtsZ-dependent cytokinesis"/>
    <property type="evidence" value="ECO:0007669"/>
    <property type="project" value="UniProtKB-UniRule"/>
</dbReference>
<dbReference type="FunFam" id="1.20.5.400:FF:000001">
    <property type="entry name" value="Cell division protein FtsB"/>
    <property type="match status" value="1"/>
</dbReference>
<dbReference type="Gene3D" id="1.20.5.400">
    <property type="match status" value="1"/>
</dbReference>
<dbReference type="HAMAP" id="MF_00599">
    <property type="entry name" value="FtsB"/>
    <property type="match status" value="1"/>
</dbReference>
<dbReference type="InterPro" id="IPR023081">
    <property type="entry name" value="Cell_div_FtsB"/>
</dbReference>
<dbReference type="InterPro" id="IPR007060">
    <property type="entry name" value="FtsL/DivIC"/>
</dbReference>
<dbReference type="NCBIfam" id="NF002058">
    <property type="entry name" value="PRK00888.1"/>
    <property type="match status" value="1"/>
</dbReference>
<dbReference type="PANTHER" id="PTHR37485">
    <property type="entry name" value="CELL DIVISION PROTEIN FTSB"/>
    <property type="match status" value="1"/>
</dbReference>
<dbReference type="PANTHER" id="PTHR37485:SF1">
    <property type="entry name" value="CELL DIVISION PROTEIN FTSB"/>
    <property type="match status" value="1"/>
</dbReference>
<dbReference type="Pfam" id="PF04977">
    <property type="entry name" value="DivIC"/>
    <property type="match status" value="1"/>
</dbReference>
<evidence type="ECO:0000255" key="1">
    <source>
        <dbReference type="HAMAP-Rule" id="MF_00599"/>
    </source>
</evidence>
<proteinExistence type="inferred from homology"/>
<comment type="function">
    <text evidence="1">Essential cell division protein. May link together the upstream cell division proteins, which are predominantly cytoplasmic, with the downstream cell division proteins, which are predominantly periplasmic.</text>
</comment>
<comment type="subunit">
    <text evidence="1">Part of a complex composed of FtsB, FtsL and FtsQ.</text>
</comment>
<comment type="subcellular location">
    <subcellularLocation>
        <location evidence="1">Cell inner membrane</location>
        <topology evidence="1">Single-pass type II membrane protein</topology>
    </subcellularLocation>
    <text evidence="1">Localizes to the division septum.</text>
</comment>
<comment type="similarity">
    <text evidence="1">Belongs to the FtsB family.</text>
</comment>
<sequence length="103" mass="11622">MGKLTLLLLAILVWLQYSLWFGKNGIHDYTRVNDDVAAQQATNAKLKARNDQLFAEIDDLNGGQEALEERARNELSMTRPGETFYRLVPDASKRAQSAGQNNR</sequence>
<feature type="chain" id="PRO_1000212186" description="Cell division protein FtsB">
    <location>
        <begin position="1"/>
        <end position="103"/>
    </location>
</feature>
<feature type="topological domain" description="Cytoplasmic" evidence="1">
    <location>
        <begin position="1"/>
        <end position="3"/>
    </location>
</feature>
<feature type="transmembrane region" description="Helical" evidence="1">
    <location>
        <begin position="4"/>
        <end position="21"/>
    </location>
</feature>
<feature type="topological domain" description="Periplasmic" evidence="1">
    <location>
        <begin position="22"/>
        <end position="103"/>
    </location>
</feature>
<feature type="coiled-coil region" evidence="1">
    <location>
        <begin position="31"/>
        <end position="71"/>
    </location>
</feature>
<organism>
    <name type="scientific">Escherichia coli (strain K12 / MC4100 / BW2952)</name>
    <dbReference type="NCBI Taxonomy" id="595496"/>
    <lineage>
        <taxon>Bacteria</taxon>
        <taxon>Pseudomonadati</taxon>
        <taxon>Pseudomonadota</taxon>
        <taxon>Gammaproteobacteria</taxon>
        <taxon>Enterobacterales</taxon>
        <taxon>Enterobacteriaceae</taxon>
        <taxon>Escherichia</taxon>
    </lineage>
</organism>
<protein>
    <recommendedName>
        <fullName evidence="1">Cell division protein FtsB</fullName>
    </recommendedName>
</protein>
<accession>C4ZZQ2</accession>
<keyword id="KW-0131">Cell cycle</keyword>
<keyword id="KW-0132">Cell division</keyword>
<keyword id="KW-0997">Cell inner membrane</keyword>
<keyword id="KW-1003">Cell membrane</keyword>
<keyword id="KW-0175">Coiled coil</keyword>
<keyword id="KW-0472">Membrane</keyword>
<keyword id="KW-0812">Transmembrane</keyword>
<keyword id="KW-1133">Transmembrane helix</keyword>
<name>FTSB_ECOBW</name>
<reference key="1">
    <citation type="journal article" date="2009" name="J. Bacteriol.">
        <title>Genomic sequencing reveals regulatory mutations and recombinational events in the widely used MC4100 lineage of Escherichia coli K-12.</title>
        <authorList>
            <person name="Ferenci T."/>
            <person name="Zhou Z."/>
            <person name="Betteridge T."/>
            <person name="Ren Y."/>
            <person name="Liu Y."/>
            <person name="Feng L."/>
            <person name="Reeves P.R."/>
            <person name="Wang L."/>
        </authorList>
    </citation>
    <scope>NUCLEOTIDE SEQUENCE [LARGE SCALE GENOMIC DNA]</scope>
    <source>
        <strain>K12 / MC4100 / BW2952</strain>
    </source>
</reference>
<gene>
    <name evidence="1" type="primary">ftsB</name>
    <name type="ordered locus">BWG_2484</name>
</gene>